<feature type="chain" id="PRO_0000172931" description="Dephospho-CoA kinase">
    <location>
        <begin position="1"/>
        <end position="199"/>
    </location>
</feature>
<feature type="domain" description="DPCK" evidence="1">
    <location>
        <begin position="3"/>
        <end position="199"/>
    </location>
</feature>
<feature type="binding site" evidence="1">
    <location>
        <begin position="11"/>
        <end position="16"/>
    </location>
    <ligand>
        <name>ATP</name>
        <dbReference type="ChEBI" id="CHEBI:30616"/>
    </ligand>
</feature>
<gene>
    <name evidence="1" type="primary">coaE</name>
    <name type="ordered locus">CPE1993</name>
</gene>
<keyword id="KW-0067">ATP-binding</keyword>
<keyword id="KW-0173">Coenzyme A biosynthesis</keyword>
<keyword id="KW-0963">Cytoplasm</keyword>
<keyword id="KW-0418">Kinase</keyword>
<keyword id="KW-0547">Nucleotide-binding</keyword>
<keyword id="KW-1185">Reference proteome</keyword>
<keyword id="KW-0808">Transferase</keyword>
<reference key="1">
    <citation type="journal article" date="2002" name="Proc. Natl. Acad. Sci. U.S.A.">
        <title>Complete genome sequence of Clostridium perfringens, an anaerobic flesh-eater.</title>
        <authorList>
            <person name="Shimizu T."/>
            <person name="Ohtani K."/>
            <person name="Hirakawa H."/>
            <person name="Ohshima K."/>
            <person name="Yamashita A."/>
            <person name="Shiba T."/>
            <person name="Ogasawara N."/>
            <person name="Hattori M."/>
            <person name="Kuhara S."/>
            <person name="Hayashi H."/>
        </authorList>
    </citation>
    <scope>NUCLEOTIDE SEQUENCE [LARGE SCALE GENOMIC DNA]</scope>
    <source>
        <strain>13 / Type A</strain>
    </source>
</reference>
<name>COAE_CLOPE</name>
<comment type="function">
    <text evidence="1">Catalyzes the phosphorylation of the 3'-hydroxyl group of dephosphocoenzyme A to form coenzyme A.</text>
</comment>
<comment type="catalytic activity">
    <reaction evidence="1">
        <text>3'-dephospho-CoA + ATP = ADP + CoA + H(+)</text>
        <dbReference type="Rhea" id="RHEA:18245"/>
        <dbReference type="ChEBI" id="CHEBI:15378"/>
        <dbReference type="ChEBI" id="CHEBI:30616"/>
        <dbReference type="ChEBI" id="CHEBI:57287"/>
        <dbReference type="ChEBI" id="CHEBI:57328"/>
        <dbReference type="ChEBI" id="CHEBI:456216"/>
        <dbReference type="EC" id="2.7.1.24"/>
    </reaction>
</comment>
<comment type="pathway">
    <text evidence="1">Cofactor biosynthesis; coenzyme A biosynthesis; CoA from (R)-pantothenate: step 5/5.</text>
</comment>
<comment type="subcellular location">
    <subcellularLocation>
        <location evidence="1">Cytoplasm</location>
    </subcellularLocation>
</comment>
<comment type="similarity">
    <text evidence="1">Belongs to the CoaE family.</text>
</comment>
<organism>
    <name type="scientific">Clostridium perfringens (strain 13 / Type A)</name>
    <dbReference type="NCBI Taxonomy" id="195102"/>
    <lineage>
        <taxon>Bacteria</taxon>
        <taxon>Bacillati</taxon>
        <taxon>Bacillota</taxon>
        <taxon>Clostridia</taxon>
        <taxon>Eubacteriales</taxon>
        <taxon>Clostridiaceae</taxon>
        <taxon>Clostridium</taxon>
    </lineage>
</organism>
<protein>
    <recommendedName>
        <fullName evidence="1">Dephospho-CoA kinase</fullName>
        <ecNumber evidence="1">2.7.1.24</ecNumber>
    </recommendedName>
    <alternativeName>
        <fullName evidence="1">Dephosphocoenzyme A kinase</fullName>
    </alternativeName>
</protein>
<evidence type="ECO:0000255" key="1">
    <source>
        <dbReference type="HAMAP-Rule" id="MF_00376"/>
    </source>
</evidence>
<proteinExistence type="inferred from homology"/>
<dbReference type="EC" id="2.7.1.24" evidence="1"/>
<dbReference type="EMBL" id="BA000016">
    <property type="protein sequence ID" value="BAB81699.1"/>
    <property type="molecule type" value="Genomic_DNA"/>
</dbReference>
<dbReference type="RefSeq" id="WP_003455198.1">
    <property type="nucleotide sequence ID" value="NC_003366.1"/>
</dbReference>
<dbReference type="SMR" id="Q8XIX0"/>
<dbReference type="STRING" id="195102.gene:10491263"/>
<dbReference type="KEGG" id="cpe:CPE1993"/>
<dbReference type="HOGENOM" id="CLU_057180_0_0_9"/>
<dbReference type="UniPathway" id="UPA00241">
    <property type="reaction ID" value="UER00356"/>
</dbReference>
<dbReference type="Proteomes" id="UP000000818">
    <property type="component" value="Chromosome"/>
</dbReference>
<dbReference type="GO" id="GO:0005737">
    <property type="term" value="C:cytoplasm"/>
    <property type="evidence" value="ECO:0007669"/>
    <property type="project" value="UniProtKB-SubCell"/>
</dbReference>
<dbReference type="GO" id="GO:0005524">
    <property type="term" value="F:ATP binding"/>
    <property type="evidence" value="ECO:0007669"/>
    <property type="project" value="UniProtKB-UniRule"/>
</dbReference>
<dbReference type="GO" id="GO:0004140">
    <property type="term" value="F:dephospho-CoA kinase activity"/>
    <property type="evidence" value="ECO:0007669"/>
    <property type="project" value="UniProtKB-UniRule"/>
</dbReference>
<dbReference type="GO" id="GO:0015937">
    <property type="term" value="P:coenzyme A biosynthetic process"/>
    <property type="evidence" value="ECO:0007669"/>
    <property type="project" value="UniProtKB-UniRule"/>
</dbReference>
<dbReference type="CDD" id="cd02022">
    <property type="entry name" value="DPCK"/>
    <property type="match status" value="1"/>
</dbReference>
<dbReference type="Gene3D" id="3.40.50.300">
    <property type="entry name" value="P-loop containing nucleotide triphosphate hydrolases"/>
    <property type="match status" value="1"/>
</dbReference>
<dbReference type="HAMAP" id="MF_00376">
    <property type="entry name" value="Dephospho_CoA_kinase"/>
    <property type="match status" value="1"/>
</dbReference>
<dbReference type="InterPro" id="IPR001977">
    <property type="entry name" value="Depp_CoAkinase"/>
</dbReference>
<dbReference type="InterPro" id="IPR027417">
    <property type="entry name" value="P-loop_NTPase"/>
</dbReference>
<dbReference type="NCBIfam" id="TIGR00152">
    <property type="entry name" value="dephospho-CoA kinase"/>
    <property type="match status" value="1"/>
</dbReference>
<dbReference type="PANTHER" id="PTHR10695:SF46">
    <property type="entry name" value="BIFUNCTIONAL COENZYME A SYNTHASE-RELATED"/>
    <property type="match status" value="1"/>
</dbReference>
<dbReference type="PANTHER" id="PTHR10695">
    <property type="entry name" value="DEPHOSPHO-COA KINASE-RELATED"/>
    <property type="match status" value="1"/>
</dbReference>
<dbReference type="Pfam" id="PF01121">
    <property type="entry name" value="CoaE"/>
    <property type="match status" value="1"/>
</dbReference>
<dbReference type="SUPFAM" id="SSF52540">
    <property type="entry name" value="P-loop containing nucleoside triphosphate hydrolases"/>
    <property type="match status" value="1"/>
</dbReference>
<dbReference type="PROSITE" id="PS51219">
    <property type="entry name" value="DPCK"/>
    <property type="match status" value="1"/>
</dbReference>
<sequence length="199" mass="23152">MIKVGLTGGICSGKSTISSMIKEAGIPVIDADIIAREVLEKYPDILLRVRATFGGHFFDWRGDFRRREFGNHIFRFPKERIKYEEIIMPYIKEEIEIKLKEYEKINTKLVVVDGATLIENDMHKDMDMVVLVWVDKSSQIERMGFRDKLSKGEAINRINSQLSLERKKDYANIIIDNSGNLIKTKEQIDDLLEFFTLYQ</sequence>
<accession>Q8XIX0</accession>